<keyword id="KW-0032">Aminotransferase</keyword>
<keyword id="KW-0663">Pyridoxal phosphate</keyword>
<keyword id="KW-1185">Reference proteome</keyword>
<keyword id="KW-0808">Transferase</keyword>
<name>DAPAT_SYNFM</name>
<evidence type="ECO:0000255" key="1">
    <source>
        <dbReference type="HAMAP-Rule" id="MF_01642"/>
    </source>
</evidence>
<evidence type="ECO:0000269" key="2">
    <source>
    </source>
</evidence>
<evidence type="ECO:0000303" key="3">
    <source>
    </source>
</evidence>
<sequence length="388" mass="42619">MAFVKAERLKLLPPYLFQEIDRLKAELTAKGVDVINLGVGDPDLPTPDHIIARLKTAAEDPSTHQYPSYSGMNDFKVSVAGWYKRRFGVELDPLSEVLTLIGSKEGLAHFPLAVINPGDLALVPTPAYPVYHVATMFAGGESYFMPLVRENGFLPDLDSIPADVARRAKVMFINYPNNPTGATAERDFFEKVIAFAREYDVIVCHDAAYTEMAFGGYRPLSFLELPGAGEVGVEFHSLSKTYNMTGWRLGFAVGNADILAGLGQVKSNIDSGAFNAVQWAGITALEGDQGCVVEMQRIYKERLDILIEGLKRIGLHPEVPRATFYVWCPTPPGYSSKDFSSLLLREAGIVATPGSGFGAPGEGYIRMALTVDKERVREAVERMRKLSF</sequence>
<feature type="chain" id="PRO_0000342255" description="LL-diaminopimelate aminotransferase">
    <location>
        <begin position="1"/>
        <end position="388"/>
    </location>
</feature>
<feature type="binding site" evidence="1">
    <location>
        <position position="15"/>
    </location>
    <ligand>
        <name>substrate</name>
    </ligand>
</feature>
<feature type="binding site" evidence="1">
    <location>
        <position position="40"/>
    </location>
    <ligand>
        <name>substrate</name>
    </ligand>
</feature>
<feature type="binding site" evidence="1">
    <location>
        <position position="69"/>
    </location>
    <ligand>
        <name>pyridoxal 5'-phosphate</name>
        <dbReference type="ChEBI" id="CHEBI:597326"/>
    </ligand>
</feature>
<feature type="binding site" evidence="1">
    <location>
        <begin position="103"/>
        <end position="104"/>
    </location>
    <ligand>
        <name>pyridoxal 5'-phosphate</name>
        <dbReference type="ChEBI" id="CHEBI:597326"/>
    </ligand>
</feature>
<feature type="binding site" evidence="1">
    <location>
        <position position="104"/>
    </location>
    <ligand>
        <name>substrate</name>
    </ligand>
</feature>
<feature type="binding site" evidence="1">
    <location>
        <position position="128"/>
    </location>
    <ligand>
        <name>pyridoxal 5'-phosphate</name>
        <dbReference type="ChEBI" id="CHEBI:597326"/>
    </ligand>
</feature>
<feature type="binding site" evidence="1">
    <location>
        <position position="128"/>
    </location>
    <ligand>
        <name>substrate</name>
    </ligand>
</feature>
<feature type="binding site" evidence="1">
    <location>
        <position position="178"/>
    </location>
    <ligand>
        <name>pyridoxal 5'-phosphate</name>
        <dbReference type="ChEBI" id="CHEBI:597326"/>
    </ligand>
</feature>
<feature type="binding site" evidence="1">
    <location>
        <position position="178"/>
    </location>
    <ligand>
        <name>substrate</name>
    </ligand>
</feature>
<feature type="binding site" evidence="1">
    <location>
        <position position="209"/>
    </location>
    <ligand>
        <name>pyridoxal 5'-phosphate</name>
        <dbReference type="ChEBI" id="CHEBI:597326"/>
    </ligand>
</feature>
<feature type="binding site" evidence="1">
    <location>
        <begin position="237"/>
        <end position="239"/>
    </location>
    <ligand>
        <name>pyridoxal 5'-phosphate</name>
        <dbReference type="ChEBI" id="CHEBI:597326"/>
    </ligand>
</feature>
<feature type="binding site" evidence="1">
    <location>
        <position position="248"/>
    </location>
    <ligand>
        <name>pyridoxal 5'-phosphate</name>
        <dbReference type="ChEBI" id="CHEBI:597326"/>
    </ligand>
</feature>
<feature type="binding site" evidence="1">
    <location>
        <position position="366"/>
    </location>
    <ligand>
        <name>substrate</name>
    </ligand>
</feature>
<feature type="modified residue" description="N6-(pyridoxal phosphate)lysine" evidence="1">
    <location>
        <position position="240"/>
    </location>
</feature>
<accession>A0LEA5</accession>
<organism>
    <name type="scientific">Syntrophobacter fumaroxidans (strain DSM 10017 / MPOB)</name>
    <dbReference type="NCBI Taxonomy" id="335543"/>
    <lineage>
        <taxon>Bacteria</taxon>
        <taxon>Pseudomonadati</taxon>
        <taxon>Thermodesulfobacteriota</taxon>
        <taxon>Syntrophobacteria</taxon>
        <taxon>Syntrophobacterales</taxon>
        <taxon>Syntrophobacteraceae</taxon>
        <taxon>Syntrophobacter</taxon>
    </lineage>
</organism>
<comment type="function">
    <text evidence="2">Involved in the synthesis of meso-diaminopimelate (m-DAP or DL-DAP), required for both lysine and peptidoglycan biosynthesis. Catalyzes the direct conversion of tetrahydrodipicolinate to LL-diaminopimelate. Can also use m-DAP instead of LL-DAP as the amino-group donor.</text>
</comment>
<comment type="catalytic activity">
    <reaction evidence="1">
        <text>(2S,6S)-2,6-diaminopimelate + 2-oxoglutarate = (S)-2,3,4,5-tetrahydrodipicolinate + L-glutamate + H2O + H(+)</text>
        <dbReference type="Rhea" id="RHEA:23988"/>
        <dbReference type="ChEBI" id="CHEBI:15377"/>
        <dbReference type="ChEBI" id="CHEBI:15378"/>
        <dbReference type="ChEBI" id="CHEBI:16810"/>
        <dbReference type="ChEBI" id="CHEBI:16845"/>
        <dbReference type="ChEBI" id="CHEBI:29985"/>
        <dbReference type="ChEBI" id="CHEBI:57609"/>
        <dbReference type="EC" id="2.6.1.83"/>
    </reaction>
</comment>
<comment type="cofactor">
    <cofactor evidence="1">
        <name>pyridoxal 5'-phosphate</name>
        <dbReference type="ChEBI" id="CHEBI:597326"/>
    </cofactor>
</comment>
<comment type="pathway">
    <text evidence="1 2">Amino-acid biosynthesis; L-lysine biosynthesis via DAP pathway; LL-2,6-diaminopimelate from (S)-tetrahydrodipicolinate (aminotransferase route): step 1/1.</text>
</comment>
<comment type="subunit">
    <text evidence="1">Homodimer.</text>
</comment>
<comment type="similarity">
    <text evidence="1">Belongs to the class-I pyridoxal-phosphate-dependent aminotransferase family. LL-diaminopimelate aminotransferase subfamily.</text>
</comment>
<protein>
    <recommendedName>
        <fullName evidence="1 3">LL-diaminopimelate aminotransferase</fullName>
        <shortName evidence="1 3">DAP-AT</shortName>
        <shortName evidence="1 3">DAP-aminotransferase</shortName>
        <shortName evidence="1 3">LL-DAP-aminotransferase</shortName>
        <ecNumber evidence="1">2.6.1.83</ecNumber>
    </recommendedName>
</protein>
<proteinExistence type="evidence at protein level"/>
<dbReference type="EC" id="2.6.1.83" evidence="1"/>
<dbReference type="EMBL" id="CP000478">
    <property type="protein sequence ID" value="ABK15757.1"/>
    <property type="molecule type" value="Genomic_DNA"/>
</dbReference>
<dbReference type="RefSeq" id="WP_011696930.1">
    <property type="nucleotide sequence ID" value="NC_008554.1"/>
</dbReference>
<dbReference type="SMR" id="A0LEA5"/>
<dbReference type="STRING" id="335543.Sfum_0054"/>
<dbReference type="KEGG" id="sfu:Sfum_0054"/>
<dbReference type="eggNOG" id="COG0436">
    <property type="taxonomic scope" value="Bacteria"/>
</dbReference>
<dbReference type="HOGENOM" id="CLU_017584_4_5_7"/>
<dbReference type="InParanoid" id="A0LEA5"/>
<dbReference type="OrthoDB" id="9804474at2"/>
<dbReference type="BRENDA" id="2.6.1.83">
    <property type="organism ID" value="746"/>
</dbReference>
<dbReference type="UniPathway" id="UPA00034">
    <property type="reaction ID" value="UER00466"/>
</dbReference>
<dbReference type="Proteomes" id="UP000001784">
    <property type="component" value="Chromosome"/>
</dbReference>
<dbReference type="GO" id="GO:0010285">
    <property type="term" value="F:L,L-diaminopimelate aminotransferase activity"/>
    <property type="evidence" value="ECO:0007669"/>
    <property type="project" value="UniProtKB-EC"/>
</dbReference>
<dbReference type="GO" id="GO:0030170">
    <property type="term" value="F:pyridoxal phosphate binding"/>
    <property type="evidence" value="ECO:0007669"/>
    <property type="project" value="InterPro"/>
</dbReference>
<dbReference type="GO" id="GO:0009089">
    <property type="term" value="P:lysine biosynthetic process via diaminopimelate"/>
    <property type="evidence" value="ECO:0007669"/>
    <property type="project" value="UniProtKB-UniPathway"/>
</dbReference>
<dbReference type="CDD" id="cd00609">
    <property type="entry name" value="AAT_like"/>
    <property type="match status" value="1"/>
</dbReference>
<dbReference type="Gene3D" id="3.90.1150.10">
    <property type="entry name" value="Aspartate Aminotransferase, domain 1"/>
    <property type="match status" value="1"/>
</dbReference>
<dbReference type="Gene3D" id="3.40.640.10">
    <property type="entry name" value="Type I PLP-dependent aspartate aminotransferase-like (Major domain)"/>
    <property type="match status" value="1"/>
</dbReference>
<dbReference type="HAMAP" id="MF_01642">
    <property type="entry name" value="DapL_aminotrans_1"/>
    <property type="match status" value="1"/>
</dbReference>
<dbReference type="InterPro" id="IPR004839">
    <property type="entry name" value="Aminotransferase_I/II_large"/>
</dbReference>
<dbReference type="InterPro" id="IPR019881">
    <property type="entry name" value="DAP-NH2Trfase_DapL_Desulfo"/>
</dbReference>
<dbReference type="InterPro" id="IPR019942">
    <property type="entry name" value="DapL/ALD1"/>
</dbReference>
<dbReference type="InterPro" id="IPR050881">
    <property type="entry name" value="LL-DAP_aminotransferase"/>
</dbReference>
<dbReference type="InterPro" id="IPR004838">
    <property type="entry name" value="NHTrfase_class1_PyrdxlP-BS"/>
</dbReference>
<dbReference type="InterPro" id="IPR015424">
    <property type="entry name" value="PyrdxlP-dep_Trfase"/>
</dbReference>
<dbReference type="InterPro" id="IPR015421">
    <property type="entry name" value="PyrdxlP-dep_Trfase_major"/>
</dbReference>
<dbReference type="InterPro" id="IPR015422">
    <property type="entry name" value="PyrdxlP-dep_Trfase_small"/>
</dbReference>
<dbReference type="NCBIfam" id="TIGR03540">
    <property type="entry name" value="DapC_direct"/>
    <property type="match status" value="1"/>
</dbReference>
<dbReference type="NCBIfam" id="NF006756">
    <property type="entry name" value="PRK09276.1"/>
    <property type="match status" value="1"/>
</dbReference>
<dbReference type="PANTHER" id="PTHR42832">
    <property type="entry name" value="AMINO ACID AMINOTRANSFERASE"/>
    <property type="match status" value="1"/>
</dbReference>
<dbReference type="PANTHER" id="PTHR42832:SF3">
    <property type="entry name" value="L-GLUTAMINE--4-(METHYLSULFANYL)-2-OXOBUTANOATE AMINOTRANSFERASE"/>
    <property type="match status" value="1"/>
</dbReference>
<dbReference type="Pfam" id="PF00155">
    <property type="entry name" value="Aminotran_1_2"/>
    <property type="match status" value="1"/>
</dbReference>
<dbReference type="SUPFAM" id="SSF53383">
    <property type="entry name" value="PLP-dependent transferases"/>
    <property type="match status" value="1"/>
</dbReference>
<dbReference type="PROSITE" id="PS00105">
    <property type="entry name" value="AA_TRANSFER_CLASS_1"/>
    <property type="match status" value="1"/>
</dbReference>
<gene>
    <name evidence="1" type="primary">dapL</name>
    <name type="ordered locus">Sfum_0054</name>
</gene>
<reference key="1">
    <citation type="submission" date="2006-10" db="EMBL/GenBank/DDBJ databases">
        <title>Complete sequence of Syntrophobacter fumaroxidans MPOB.</title>
        <authorList>
            <consortium name="US DOE Joint Genome Institute"/>
            <person name="Copeland A."/>
            <person name="Lucas S."/>
            <person name="Lapidus A."/>
            <person name="Barry K."/>
            <person name="Detter J.C."/>
            <person name="Glavina del Rio T."/>
            <person name="Hammon N."/>
            <person name="Israni S."/>
            <person name="Pitluck S."/>
            <person name="Goltsman E.G."/>
            <person name="Martinez M."/>
            <person name="Schmutz J."/>
            <person name="Larimer F."/>
            <person name="Land M."/>
            <person name="Hauser L."/>
            <person name="Kyrpides N."/>
            <person name="Kim E."/>
            <person name="Boone D.R."/>
            <person name="Brockman F."/>
            <person name="Culley D."/>
            <person name="Ferry J."/>
            <person name="Gunsalus R."/>
            <person name="McInerney M.J."/>
            <person name="Morrison M."/>
            <person name="Plugge C."/>
            <person name="Rohlin L."/>
            <person name="Scholten J."/>
            <person name="Sieber J."/>
            <person name="Stams A.J.M."/>
            <person name="Worm P."/>
            <person name="Henstra A.M."/>
            <person name="Richardson P."/>
        </authorList>
    </citation>
    <scope>NUCLEOTIDE SEQUENCE [LARGE SCALE GENOMIC DNA]</scope>
    <source>
        <strain>DSM 10017 / MPOB</strain>
    </source>
</reference>
<reference key="2">
    <citation type="journal article" date="2008" name="J. Bacteriol.">
        <title>Biochemical and phylogenetic characterization of a novel diaminopimelate biosynthesis pathway in prokaryotes identifies a diverged form of LL-diaminopimelate aminotransferase.</title>
        <authorList>
            <person name="Hudson A.O."/>
            <person name="Gilvarg C."/>
            <person name="Leustek T."/>
        </authorList>
    </citation>
    <scope>FUNCTION AS A LL-DAP AMINOTRANSFERASE</scope>
    <scope>SUBSTRATE SPECIFICITY</scope>
    <scope>PATHWAY</scope>
</reference>